<reference key="1">
    <citation type="journal article" date="2002" name="DNA Res.">
        <title>Complete genomic sequence of nitrogen-fixing symbiotic bacterium Bradyrhizobium japonicum USDA110.</title>
        <authorList>
            <person name="Kaneko T."/>
            <person name="Nakamura Y."/>
            <person name="Sato S."/>
            <person name="Minamisawa K."/>
            <person name="Uchiumi T."/>
            <person name="Sasamoto S."/>
            <person name="Watanabe A."/>
            <person name="Idesawa K."/>
            <person name="Iriguchi M."/>
            <person name="Kawashima K."/>
            <person name="Kohara M."/>
            <person name="Matsumoto M."/>
            <person name="Shimpo S."/>
            <person name="Tsuruoka H."/>
            <person name="Wada T."/>
            <person name="Yamada M."/>
            <person name="Tabata S."/>
        </authorList>
    </citation>
    <scope>NUCLEOTIDE SEQUENCE [LARGE SCALE GENOMIC DNA]</scope>
    <source>
        <strain>JCM 10833 / BCRC 13528 / IAM 13628 / NBRC 14792 / USDA 110</strain>
    </source>
</reference>
<name>SYP_BRADU</name>
<comment type="function">
    <text evidence="1">Catalyzes the attachment of proline to tRNA(Pro) in a two-step reaction: proline is first activated by ATP to form Pro-AMP and then transferred to the acceptor end of tRNA(Pro).</text>
</comment>
<comment type="catalytic activity">
    <reaction evidence="1">
        <text>tRNA(Pro) + L-proline + ATP = L-prolyl-tRNA(Pro) + AMP + diphosphate</text>
        <dbReference type="Rhea" id="RHEA:14305"/>
        <dbReference type="Rhea" id="RHEA-COMP:9700"/>
        <dbReference type="Rhea" id="RHEA-COMP:9702"/>
        <dbReference type="ChEBI" id="CHEBI:30616"/>
        <dbReference type="ChEBI" id="CHEBI:33019"/>
        <dbReference type="ChEBI" id="CHEBI:60039"/>
        <dbReference type="ChEBI" id="CHEBI:78442"/>
        <dbReference type="ChEBI" id="CHEBI:78532"/>
        <dbReference type="ChEBI" id="CHEBI:456215"/>
        <dbReference type="EC" id="6.1.1.15"/>
    </reaction>
</comment>
<comment type="subunit">
    <text evidence="1">Homodimer.</text>
</comment>
<comment type="subcellular location">
    <subcellularLocation>
        <location evidence="1">Cytoplasm</location>
    </subcellularLocation>
</comment>
<comment type="similarity">
    <text evidence="1">Belongs to the class-II aminoacyl-tRNA synthetase family. ProS type 2 subfamily.</text>
</comment>
<organism>
    <name type="scientific">Bradyrhizobium diazoefficiens (strain JCM 10833 / BCRC 13528 / IAM 13628 / NBRC 14792 / USDA 110)</name>
    <dbReference type="NCBI Taxonomy" id="224911"/>
    <lineage>
        <taxon>Bacteria</taxon>
        <taxon>Pseudomonadati</taxon>
        <taxon>Pseudomonadota</taxon>
        <taxon>Alphaproteobacteria</taxon>
        <taxon>Hyphomicrobiales</taxon>
        <taxon>Nitrobacteraceae</taxon>
        <taxon>Bradyrhizobium</taxon>
    </lineage>
</organism>
<gene>
    <name evidence="1" type="primary">proS</name>
    <name type="ordered locus">bll4877</name>
</gene>
<evidence type="ECO:0000255" key="1">
    <source>
        <dbReference type="HAMAP-Rule" id="MF_01570"/>
    </source>
</evidence>
<keyword id="KW-0030">Aminoacyl-tRNA synthetase</keyword>
<keyword id="KW-0067">ATP-binding</keyword>
<keyword id="KW-0963">Cytoplasm</keyword>
<keyword id="KW-0436">Ligase</keyword>
<keyword id="KW-0547">Nucleotide-binding</keyword>
<keyword id="KW-0648">Protein biosynthesis</keyword>
<keyword id="KW-1185">Reference proteome</keyword>
<sequence length="439" mass="49219">MRLSRFFLPILKENPKEAEIVSHRLMLRAGMIRQEAAGIYAWLPLGFRVLKKIEQIVREEQDRSGALELLMPTLQLADLWRESGRYDAYGPEMLRIADRHKRELLYGPTNEEMITEIFRAYVKSYKNLPLNLYHIQWKFRDEQRPRFGVMRGREFLMKDAYSFDLNEAAARVAYNKMFVAYLRTFARMGLKAIPMRAETGPIGGDLSHEFIVLAETGESGVFINRDVLDLPVPGEDVDYESDLTPIIKQWTSVYAATEDVHDAARFEQEVPEAKRLNTRGIEVGQIFYFGTKYSEPMKAMVAGPDGVDVPIHGGSYGVGVSRLLGAIIEACHDDAGIKWPEAVAPFRAVVLNLKQGDAAVDAACEKLYAELQAKGVDVLYDDTDQRAGAKFAAADLIGIPWQIMIGPKGLADGKVELKRRSDGSRETMSPADAVARLVG</sequence>
<dbReference type="EC" id="6.1.1.15" evidence="1"/>
<dbReference type="EMBL" id="BA000040">
    <property type="protein sequence ID" value="BAC50142.1"/>
    <property type="molecule type" value="Genomic_DNA"/>
</dbReference>
<dbReference type="RefSeq" id="NP_771517.1">
    <property type="nucleotide sequence ID" value="NC_004463.1"/>
</dbReference>
<dbReference type="RefSeq" id="WP_011087644.1">
    <property type="nucleotide sequence ID" value="NC_004463.1"/>
</dbReference>
<dbReference type="SMR" id="Q89KM8"/>
<dbReference type="FunCoup" id="Q89KM8">
    <property type="interactions" value="650"/>
</dbReference>
<dbReference type="STRING" id="224911.AAV28_21705"/>
<dbReference type="EnsemblBacteria" id="BAC50142">
    <property type="protein sequence ID" value="BAC50142"/>
    <property type="gene ID" value="BAC50142"/>
</dbReference>
<dbReference type="GeneID" id="46491882"/>
<dbReference type="KEGG" id="bja:bll4877"/>
<dbReference type="PATRIC" id="fig|224911.44.peg.4725"/>
<dbReference type="eggNOG" id="COG0442">
    <property type="taxonomic scope" value="Bacteria"/>
</dbReference>
<dbReference type="HOGENOM" id="CLU_016739_4_2_5"/>
<dbReference type="InParanoid" id="Q89KM8"/>
<dbReference type="OrthoDB" id="9809052at2"/>
<dbReference type="PhylomeDB" id="Q89KM8"/>
<dbReference type="Proteomes" id="UP000002526">
    <property type="component" value="Chromosome"/>
</dbReference>
<dbReference type="GO" id="GO:0005829">
    <property type="term" value="C:cytosol"/>
    <property type="evidence" value="ECO:0000318"/>
    <property type="project" value="GO_Central"/>
</dbReference>
<dbReference type="GO" id="GO:0005524">
    <property type="term" value="F:ATP binding"/>
    <property type="evidence" value="ECO:0007669"/>
    <property type="project" value="UniProtKB-UniRule"/>
</dbReference>
<dbReference type="GO" id="GO:0004827">
    <property type="term" value="F:proline-tRNA ligase activity"/>
    <property type="evidence" value="ECO:0000318"/>
    <property type="project" value="GO_Central"/>
</dbReference>
<dbReference type="GO" id="GO:0006433">
    <property type="term" value="P:prolyl-tRNA aminoacylation"/>
    <property type="evidence" value="ECO:0000318"/>
    <property type="project" value="GO_Central"/>
</dbReference>
<dbReference type="CDD" id="cd00861">
    <property type="entry name" value="ProRS_anticodon_short"/>
    <property type="match status" value="1"/>
</dbReference>
<dbReference type="CDD" id="cd00779">
    <property type="entry name" value="ProRS_core_prok"/>
    <property type="match status" value="1"/>
</dbReference>
<dbReference type="FunFam" id="3.30.930.10:FF:000042">
    <property type="entry name" value="probable proline--tRNA ligase, mitochondrial"/>
    <property type="match status" value="1"/>
</dbReference>
<dbReference type="FunFam" id="3.40.50.800:FF:000032">
    <property type="entry name" value="Proline--tRNA ligase"/>
    <property type="match status" value="1"/>
</dbReference>
<dbReference type="Gene3D" id="3.40.50.800">
    <property type="entry name" value="Anticodon-binding domain"/>
    <property type="match status" value="1"/>
</dbReference>
<dbReference type="Gene3D" id="3.30.930.10">
    <property type="entry name" value="Bira Bifunctional Protein, Domain 2"/>
    <property type="match status" value="1"/>
</dbReference>
<dbReference type="HAMAP" id="MF_01570">
    <property type="entry name" value="Pro_tRNA_synth_type2"/>
    <property type="match status" value="1"/>
</dbReference>
<dbReference type="InterPro" id="IPR002314">
    <property type="entry name" value="aa-tRNA-synt_IIb"/>
</dbReference>
<dbReference type="InterPro" id="IPR006195">
    <property type="entry name" value="aa-tRNA-synth_II"/>
</dbReference>
<dbReference type="InterPro" id="IPR045864">
    <property type="entry name" value="aa-tRNA-synth_II/BPL/LPL"/>
</dbReference>
<dbReference type="InterPro" id="IPR004154">
    <property type="entry name" value="Anticodon-bd"/>
</dbReference>
<dbReference type="InterPro" id="IPR036621">
    <property type="entry name" value="Anticodon-bd_dom_sf"/>
</dbReference>
<dbReference type="InterPro" id="IPR002316">
    <property type="entry name" value="Pro-tRNA-ligase_IIa"/>
</dbReference>
<dbReference type="InterPro" id="IPR004500">
    <property type="entry name" value="Pro-tRNA-synth_IIa_bac-type"/>
</dbReference>
<dbReference type="InterPro" id="IPR050062">
    <property type="entry name" value="Pro-tRNA_synthetase"/>
</dbReference>
<dbReference type="InterPro" id="IPR023716">
    <property type="entry name" value="Prolyl-tRNA_ligase_IIa_type2"/>
</dbReference>
<dbReference type="InterPro" id="IPR044140">
    <property type="entry name" value="ProRS_anticodon_short"/>
</dbReference>
<dbReference type="InterPro" id="IPR033730">
    <property type="entry name" value="ProRS_core_prok"/>
</dbReference>
<dbReference type="NCBIfam" id="NF008979">
    <property type="entry name" value="PRK12325.1"/>
    <property type="match status" value="1"/>
</dbReference>
<dbReference type="NCBIfam" id="TIGR00409">
    <property type="entry name" value="proS_fam_II"/>
    <property type="match status" value="1"/>
</dbReference>
<dbReference type="PANTHER" id="PTHR42753">
    <property type="entry name" value="MITOCHONDRIAL RIBOSOME PROTEIN L39/PROLYL-TRNA LIGASE FAMILY MEMBER"/>
    <property type="match status" value="1"/>
</dbReference>
<dbReference type="PANTHER" id="PTHR42753:SF2">
    <property type="entry name" value="PROLINE--TRNA LIGASE"/>
    <property type="match status" value="1"/>
</dbReference>
<dbReference type="Pfam" id="PF03129">
    <property type="entry name" value="HGTP_anticodon"/>
    <property type="match status" value="1"/>
</dbReference>
<dbReference type="Pfam" id="PF00587">
    <property type="entry name" value="tRNA-synt_2b"/>
    <property type="match status" value="1"/>
</dbReference>
<dbReference type="PRINTS" id="PR01046">
    <property type="entry name" value="TRNASYNTHPRO"/>
</dbReference>
<dbReference type="SUPFAM" id="SSF52954">
    <property type="entry name" value="Class II aaRS ABD-related"/>
    <property type="match status" value="1"/>
</dbReference>
<dbReference type="SUPFAM" id="SSF55681">
    <property type="entry name" value="Class II aaRS and biotin synthetases"/>
    <property type="match status" value="1"/>
</dbReference>
<dbReference type="PROSITE" id="PS50862">
    <property type="entry name" value="AA_TRNA_LIGASE_II"/>
    <property type="match status" value="1"/>
</dbReference>
<protein>
    <recommendedName>
        <fullName evidence="1">Proline--tRNA ligase</fullName>
        <ecNumber evidence="1">6.1.1.15</ecNumber>
    </recommendedName>
    <alternativeName>
        <fullName evidence="1">Prolyl-tRNA synthetase</fullName>
        <shortName evidence="1">ProRS</shortName>
    </alternativeName>
</protein>
<accession>Q89KM8</accession>
<proteinExistence type="inferred from homology"/>
<feature type="chain" id="PRO_0000248891" description="Proline--tRNA ligase">
    <location>
        <begin position="1"/>
        <end position="439"/>
    </location>
</feature>